<keyword id="KW-0067">ATP-binding</keyword>
<keyword id="KW-0460">Magnesium</keyword>
<keyword id="KW-0511">Multifunctional enzyme</keyword>
<keyword id="KW-0547">Nucleotide-binding</keyword>
<keyword id="KW-0548">Nucleotidyltransferase</keyword>
<keyword id="KW-0808">Transferase</keyword>
<sequence length="974" mass="110251">MKNAFLKTQLLPLRPLDESGSQWLKDITEQARKENLESLVSSLSNQGKQINFLNAVMTLSPFLREVLIANPSYLSPLLYVDIETRLSEIIEDITLIDKNKSIHETTLMAALRRKKREAHVLIALADLGGVFTYEISCAWLTRLGEAALGVALRFLLREAHDHGKINLSNREDPEKDCGLIILGMGKFGAGELNYSSDIDLIVFIDEMSPHVGNLSESIDVFSKMVRRLIRIIQERTAEGYVFRLDFRLRPDPGSTPLALPVRTALRYYEGRGQNWERAAMIKARPVAGDKSAGFNFLKELFPYVWRKYLDYAAIADIHSIKRQIHAYKNYDQISAYGHNIKLGRGGIREIEFFVQTQQLIAGGRFPQLRGRQTVAMLAELHRLGWISEKTRDSLVKSYAFLRNVEHRIQMLADEQTHILPIDVSQFTSVAYLMGYQETNSFICDLLKTLQVVEKHYAALFENEQELGLEIGNLVFTGEEDDPETLITLRRLGFERASDICRIMRTLHCGRYKSTQSAEARERLTELTPALLKAFGATKRADEVMLRFDSFLQGLPSGIQLFSLLQSNPSLLDMLVLIMGAAPRLAEIITHKPHVFDGMLDPTIFSELPTKTYLKNRLEYFLEGVISYEEILDHLRVFADEQRFLIGIRILNGAITGKKAGFAFTALADLIIAKTFATVQEEFSRLHGNIKGGRVGILGMGKLGSCELTAGSDVDLILLYEHDEDAEISDGGKPLYIFQYYTRLTQRLVAALSTLTSQGILYAVDLRLRPLGNKGPVAVSFEFFRKYYRKEAWIWEHLALTRARGIAGDLDFLQKLENEVYEIIAFSRNKKDVIKAVCEMHVLIGKGKPPENRWDLKRMPGGIMHLEFIAQFALITHVIVFQIGATTADILTQLPNSFLNQSFISDLHHAYGLYTNLSQIIRLCLNDALDLNNMPPGLSDLLLSSVGEPDLLRVEKLIEETGQLVYSIFKQVMKY</sequence>
<proteinExistence type="inferred from homology"/>
<feature type="chain" id="PRO_0000209228" description="Bifunctional glutamine synthetase adenylyltransferase/adenylyl-removing enzyme">
    <location>
        <begin position="1"/>
        <end position="974"/>
    </location>
</feature>
<feature type="region of interest" description="Adenylyl removase" evidence="1">
    <location>
        <begin position="1"/>
        <end position="464"/>
    </location>
</feature>
<feature type="region of interest" description="Adenylyl transferase" evidence="1">
    <location>
        <begin position="468"/>
        <end position="974"/>
    </location>
</feature>
<reference key="1">
    <citation type="journal article" date="2004" name="Proc. Natl. Acad. Sci. U.S.A.">
        <title>The louse-borne human pathogen Bartonella quintana is a genomic derivative of the zoonotic agent Bartonella henselae.</title>
        <authorList>
            <person name="Alsmark U.C.M."/>
            <person name="Frank A.C."/>
            <person name="Karlberg E.O."/>
            <person name="Legault B.-A."/>
            <person name="Ardell D.H."/>
            <person name="Canbaeck B."/>
            <person name="Eriksson A.-S."/>
            <person name="Naeslund A.K."/>
            <person name="Handley S.A."/>
            <person name="Huvet M."/>
            <person name="La Scola B."/>
            <person name="Holmberg M."/>
            <person name="Andersson S.G.E."/>
        </authorList>
    </citation>
    <scope>NUCLEOTIDE SEQUENCE [LARGE SCALE GENOMIC DNA]</scope>
    <source>
        <strain>ATCC 49882 / DSM 28221 / CCUG 30454 / Houston 1</strain>
    </source>
</reference>
<protein>
    <recommendedName>
        <fullName evidence="1">Bifunctional glutamine synthetase adenylyltransferase/adenylyl-removing enzyme</fullName>
    </recommendedName>
    <alternativeName>
        <fullName evidence="1">ATP:glutamine synthetase adenylyltransferase</fullName>
    </alternativeName>
    <alternativeName>
        <fullName evidence="1">ATase</fullName>
    </alternativeName>
    <domain>
        <recommendedName>
            <fullName evidence="1">Glutamine synthetase adenylyl-L-tyrosine phosphorylase</fullName>
            <ecNumber evidence="1">2.7.7.89</ecNumber>
        </recommendedName>
        <alternativeName>
            <fullName evidence="1">Adenylyl removase</fullName>
            <shortName evidence="1">AR</shortName>
            <shortName evidence="1">AT-N</shortName>
        </alternativeName>
    </domain>
    <domain>
        <recommendedName>
            <fullName evidence="1">Glutamine synthetase adenylyl transferase</fullName>
            <ecNumber evidence="1">2.7.7.42</ecNumber>
        </recommendedName>
        <alternativeName>
            <fullName evidence="1">Adenylyl transferase</fullName>
            <shortName evidence="1">AT</shortName>
            <shortName evidence="1">AT-C</shortName>
        </alternativeName>
    </domain>
</protein>
<organism>
    <name type="scientific">Bartonella henselae (strain ATCC 49882 / DSM 28221 / CCUG 30454 / Houston 1)</name>
    <name type="common">Rochalimaea henselae</name>
    <dbReference type="NCBI Taxonomy" id="283166"/>
    <lineage>
        <taxon>Bacteria</taxon>
        <taxon>Pseudomonadati</taxon>
        <taxon>Pseudomonadota</taxon>
        <taxon>Alphaproteobacteria</taxon>
        <taxon>Hyphomicrobiales</taxon>
        <taxon>Bartonellaceae</taxon>
        <taxon>Bartonella</taxon>
    </lineage>
</organism>
<dbReference type="EC" id="2.7.7.89" evidence="1"/>
<dbReference type="EC" id="2.7.7.42" evidence="1"/>
<dbReference type="EMBL" id="BX897699">
    <property type="protein sequence ID" value="CAF27288.1"/>
    <property type="molecule type" value="Genomic_DNA"/>
</dbReference>
<dbReference type="RefSeq" id="WP_011180411.1">
    <property type="nucleotide sequence ID" value="NZ_LRIJ02000001.1"/>
</dbReference>
<dbReference type="SMR" id="Q6G488"/>
<dbReference type="PaxDb" id="283166-BH04800"/>
<dbReference type="EnsemblBacteria" id="CAF27288">
    <property type="protein sequence ID" value="CAF27288"/>
    <property type="gene ID" value="BH04800"/>
</dbReference>
<dbReference type="KEGG" id="bhe:BH04800"/>
<dbReference type="eggNOG" id="COG1391">
    <property type="taxonomic scope" value="Bacteria"/>
</dbReference>
<dbReference type="OrthoDB" id="9759366at2"/>
<dbReference type="Proteomes" id="UP000000421">
    <property type="component" value="Chromosome"/>
</dbReference>
<dbReference type="GO" id="GO:0005829">
    <property type="term" value="C:cytosol"/>
    <property type="evidence" value="ECO:0007669"/>
    <property type="project" value="TreeGrafter"/>
</dbReference>
<dbReference type="GO" id="GO:0008882">
    <property type="term" value="F:[glutamate-ammonia-ligase] adenylyltransferase activity"/>
    <property type="evidence" value="ECO:0007669"/>
    <property type="project" value="UniProtKB-UniRule"/>
</dbReference>
<dbReference type="GO" id="GO:0047388">
    <property type="term" value="F:[glutamine synthetase]-adenylyl-L-tyrosine phosphorylase activity"/>
    <property type="evidence" value="ECO:0007669"/>
    <property type="project" value="UniProtKB-EC"/>
</dbReference>
<dbReference type="GO" id="GO:0005524">
    <property type="term" value="F:ATP binding"/>
    <property type="evidence" value="ECO:0007669"/>
    <property type="project" value="UniProtKB-UniRule"/>
</dbReference>
<dbReference type="GO" id="GO:0000287">
    <property type="term" value="F:magnesium ion binding"/>
    <property type="evidence" value="ECO:0007669"/>
    <property type="project" value="UniProtKB-UniRule"/>
</dbReference>
<dbReference type="GO" id="GO:0000820">
    <property type="term" value="P:regulation of glutamine family amino acid metabolic process"/>
    <property type="evidence" value="ECO:0007669"/>
    <property type="project" value="UniProtKB-UniRule"/>
</dbReference>
<dbReference type="CDD" id="cd05401">
    <property type="entry name" value="NT_GlnE_GlnD_like"/>
    <property type="match status" value="2"/>
</dbReference>
<dbReference type="Gene3D" id="1.20.120.1510">
    <property type="match status" value="1"/>
</dbReference>
<dbReference type="Gene3D" id="3.30.460.10">
    <property type="entry name" value="Beta Polymerase, domain 2"/>
    <property type="match status" value="2"/>
</dbReference>
<dbReference type="Gene3D" id="1.20.120.330">
    <property type="entry name" value="Nucleotidyltransferases domain 2"/>
    <property type="match status" value="2"/>
</dbReference>
<dbReference type="HAMAP" id="MF_00802">
    <property type="entry name" value="GlnE"/>
    <property type="match status" value="1"/>
</dbReference>
<dbReference type="InterPro" id="IPR023057">
    <property type="entry name" value="GlnE"/>
</dbReference>
<dbReference type="InterPro" id="IPR005190">
    <property type="entry name" value="GlnE_rpt_dom"/>
</dbReference>
<dbReference type="InterPro" id="IPR043519">
    <property type="entry name" value="NT_sf"/>
</dbReference>
<dbReference type="InterPro" id="IPR013546">
    <property type="entry name" value="PII_UdlTrfase/GS_AdlTrfase"/>
</dbReference>
<dbReference type="NCBIfam" id="NF008292">
    <property type="entry name" value="PRK11072.1"/>
    <property type="match status" value="1"/>
</dbReference>
<dbReference type="NCBIfam" id="NF010706">
    <property type="entry name" value="PRK14108.1"/>
    <property type="match status" value="1"/>
</dbReference>
<dbReference type="PANTHER" id="PTHR30621:SF0">
    <property type="entry name" value="BIFUNCTIONAL GLUTAMINE SYNTHETASE ADENYLYLTRANSFERASE_ADENYLYL-REMOVING ENZYME"/>
    <property type="match status" value="1"/>
</dbReference>
<dbReference type="PANTHER" id="PTHR30621">
    <property type="entry name" value="GLUTAMINE SYNTHETASE ADENYLYLTRANSFERASE"/>
    <property type="match status" value="1"/>
</dbReference>
<dbReference type="Pfam" id="PF08335">
    <property type="entry name" value="GlnD_UR_UTase"/>
    <property type="match status" value="1"/>
</dbReference>
<dbReference type="Pfam" id="PF03710">
    <property type="entry name" value="GlnE"/>
    <property type="match status" value="2"/>
</dbReference>
<dbReference type="SUPFAM" id="SSF81301">
    <property type="entry name" value="Nucleotidyltransferase"/>
    <property type="match status" value="2"/>
</dbReference>
<dbReference type="SUPFAM" id="SSF81593">
    <property type="entry name" value="Nucleotidyltransferase substrate binding subunit/domain"/>
    <property type="match status" value="2"/>
</dbReference>
<accession>Q6G488</accession>
<name>GLNE_BARHE</name>
<evidence type="ECO:0000255" key="1">
    <source>
        <dbReference type="HAMAP-Rule" id="MF_00802"/>
    </source>
</evidence>
<comment type="function">
    <text evidence="1">Involved in the regulation of glutamine synthetase GlnA, a key enzyme in the process to assimilate ammonia. When cellular nitrogen levels are high, the C-terminal adenylyl transferase (AT) inactivates GlnA by covalent transfer of an adenylyl group from ATP to specific tyrosine residue of GlnA, thus reducing its activity. Conversely, when nitrogen levels are low, the N-terminal adenylyl removase (AR) activates GlnA by removing the adenylyl group by phosphorolysis, increasing its activity. The regulatory region of GlnE binds the signal transduction protein PII (GlnB) which indicates the nitrogen status of the cell.</text>
</comment>
<comment type="catalytic activity">
    <reaction evidence="1">
        <text>[glutamine synthetase]-O(4)-(5'-adenylyl)-L-tyrosine + phosphate = [glutamine synthetase]-L-tyrosine + ADP</text>
        <dbReference type="Rhea" id="RHEA:43716"/>
        <dbReference type="Rhea" id="RHEA-COMP:10660"/>
        <dbReference type="Rhea" id="RHEA-COMP:10661"/>
        <dbReference type="ChEBI" id="CHEBI:43474"/>
        <dbReference type="ChEBI" id="CHEBI:46858"/>
        <dbReference type="ChEBI" id="CHEBI:83624"/>
        <dbReference type="ChEBI" id="CHEBI:456216"/>
        <dbReference type="EC" id="2.7.7.89"/>
    </reaction>
</comment>
<comment type="catalytic activity">
    <reaction evidence="1">
        <text>[glutamine synthetase]-L-tyrosine + ATP = [glutamine synthetase]-O(4)-(5'-adenylyl)-L-tyrosine + diphosphate</text>
        <dbReference type="Rhea" id="RHEA:18589"/>
        <dbReference type="Rhea" id="RHEA-COMP:10660"/>
        <dbReference type="Rhea" id="RHEA-COMP:10661"/>
        <dbReference type="ChEBI" id="CHEBI:30616"/>
        <dbReference type="ChEBI" id="CHEBI:33019"/>
        <dbReference type="ChEBI" id="CHEBI:46858"/>
        <dbReference type="ChEBI" id="CHEBI:83624"/>
        <dbReference type="EC" id="2.7.7.42"/>
    </reaction>
</comment>
<comment type="cofactor">
    <cofactor evidence="1">
        <name>Mg(2+)</name>
        <dbReference type="ChEBI" id="CHEBI:18420"/>
    </cofactor>
</comment>
<comment type="similarity">
    <text evidence="1">Belongs to the GlnE family.</text>
</comment>
<gene>
    <name evidence="1" type="primary">glnE</name>
    <name type="ordered locus">BH04800</name>
</gene>